<protein>
    <recommendedName>
        <fullName evidence="1">Ribosomal RNA small subunit methyltransferase A</fullName>
        <ecNumber evidence="1">2.1.1.182</ecNumber>
    </recommendedName>
    <alternativeName>
        <fullName evidence="1">16S rRNA (adenine(1518)-N(6)/adenine(1519)-N(6))-dimethyltransferase</fullName>
    </alternativeName>
    <alternativeName>
        <fullName evidence="1">16S rRNA dimethyladenosine transferase</fullName>
    </alternativeName>
    <alternativeName>
        <fullName evidence="1">16S rRNA dimethylase</fullName>
    </alternativeName>
    <alternativeName>
        <fullName evidence="1">S-adenosylmethionine-6-N', N'-adenosyl(rRNA) dimethyltransferase</fullName>
    </alternativeName>
</protein>
<proteinExistence type="inferred from homology"/>
<reference key="1">
    <citation type="journal article" date="2006" name="J. Bacteriol.">
        <title>Pathogenomic sequence analysis of Bacillus cereus and Bacillus thuringiensis isolates closely related to Bacillus anthracis.</title>
        <authorList>
            <person name="Han C.S."/>
            <person name="Xie G."/>
            <person name="Challacombe J.F."/>
            <person name="Altherr M.R."/>
            <person name="Bhotika S.S."/>
            <person name="Bruce D."/>
            <person name="Campbell C.S."/>
            <person name="Campbell M.L."/>
            <person name="Chen J."/>
            <person name="Chertkov O."/>
            <person name="Cleland C."/>
            <person name="Dimitrijevic M."/>
            <person name="Doggett N.A."/>
            <person name="Fawcett J.J."/>
            <person name="Glavina T."/>
            <person name="Goodwin L.A."/>
            <person name="Hill K.K."/>
            <person name="Hitchcock P."/>
            <person name="Jackson P.J."/>
            <person name="Keim P."/>
            <person name="Kewalramani A.R."/>
            <person name="Longmire J."/>
            <person name="Lucas S."/>
            <person name="Malfatti S."/>
            <person name="McMurry K."/>
            <person name="Meincke L.J."/>
            <person name="Misra M."/>
            <person name="Moseman B.L."/>
            <person name="Mundt M."/>
            <person name="Munk A.C."/>
            <person name="Okinaka R.T."/>
            <person name="Parson-Quintana B."/>
            <person name="Reilly L.P."/>
            <person name="Richardson P."/>
            <person name="Robinson D.L."/>
            <person name="Rubin E."/>
            <person name="Saunders E."/>
            <person name="Tapia R."/>
            <person name="Tesmer J.G."/>
            <person name="Thayer N."/>
            <person name="Thompson L.S."/>
            <person name="Tice H."/>
            <person name="Ticknor L.O."/>
            <person name="Wills P.L."/>
            <person name="Brettin T.S."/>
            <person name="Gilna P."/>
        </authorList>
    </citation>
    <scope>NUCLEOTIDE SEQUENCE [LARGE SCALE GENOMIC DNA]</scope>
    <source>
        <strain>ZK / E33L</strain>
    </source>
</reference>
<evidence type="ECO:0000255" key="1">
    <source>
        <dbReference type="HAMAP-Rule" id="MF_00607"/>
    </source>
</evidence>
<sequence>MKDIATPNRTKDIVEKYGFSFKKSLGQNFLIDTNVLNRIVDHAEIGSESGAIEIGPGIGALTEQLAKRAKKVVAFEIDQRLLPILDETLAPYGNVTVINKDVLKADVHEVFSEQFEEGQDVMVVANLPYYITTPILFKLLEEKLPVRGFVVMMQKEVGDRLAAKPGTKEYGSLSIAIQYYTEVETVMTVPRTVFVPQPNVDSAIIRLLKRPKPVVEVTDETFFFEVVRASFAQRRKTLMNNLSNNLNGFPKDKELLDRILTEVGIDPKRRGETLSIEEFATLSNALVLHKLS</sequence>
<accession>Q63HJ1</accession>
<gene>
    <name evidence="1" type="primary">rsmA</name>
    <name evidence="1" type="synonym">ksgA</name>
    <name type="ordered locus">BCE33L0037</name>
</gene>
<organism>
    <name type="scientific">Bacillus cereus (strain ZK / E33L)</name>
    <dbReference type="NCBI Taxonomy" id="288681"/>
    <lineage>
        <taxon>Bacteria</taxon>
        <taxon>Bacillati</taxon>
        <taxon>Bacillota</taxon>
        <taxon>Bacilli</taxon>
        <taxon>Bacillales</taxon>
        <taxon>Bacillaceae</taxon>
        <taxon>Bacillus</taxon>
        <taxon>Bacillus cereus group</taxon>
    </lineage>
</organism>
<keyword id="KW-0963">Cytoplasm</keyword>
<keyword id="KW-0489">Methyltransferase</keyword>
<keyword id="KW-0694">RNA-binding</keyword>
<keyword id="KW-0698">rRNA processing</keyword>
<keyword id="KW-0949">S-adenosyl-L-methionine</keyword>
<keyword id="KW-0808">Transferase</keyword>
<name>RSMA_BACCZ</name>
<feature type="chain" id="PRO_0000101479" description="Ribosomal RNA small subunit methyltransferase A">
    <location>
        <begin position="1"/>
        <end position="292"/>
    </location>
</feature>
<feature type="binding site" evidence="1">
    <location>
        <position position="28"/>
    </location>
    <ligand>
        <name>S-adenosyl-L-methionine</name>
        <dbReference type="ChEBI" id="CHEBI:59789"/>
    </ligand>
</feature>
<feature type="binding site" evidence="1">
    <location>
        <position position="30"/>
    </location>
    <ligand>
        <name>S-adenosyl-L-methionine</name>
        <dbReference type="ChEBI" id="CHEBI:59789"/>
    </ligand>
</feature>
<feature type="binding site" evidence="1">
    <location>
        <position position="55"/>
    </location>
    <ligand>
        <name>S-adenosyl-L-methionine</name>
        <dbReference type="ChEBI" id="CHEBI:59789"/>
    </ligand>
</feature>
<feature type="binding site" evidence="1">
    <location>
        <position position="76"/>
    </location>
    <ligand>
        <name>S-adenosyl-L-methionine</name>
        <dbReference type="ChEBI" id="CHEBI:59789"/>
    </ligand>
</feature>
<feature type="binding site" evidence="1">
    <location>
        <position position="101"/>
    </location>
    <ligand>
        <name>S-adenosyl-L-methionine</name>
        <dbReference type="ChEBI" id="CHEBI:59789"/>
    </ligand>
</feature>
<feature type="binding site" evidence="1">
    <location>
        <position position="126"/>
    </location>
    <ligand>
        <name>S-adenosyl-L-methionine</name>
        <dbReference type="ChEBI" id="CHEBI:59789"/>
    </ligand>
</feature>
<comment type="function">
    <text evidence="1">Specifically dimethylates two adjacent adenosines (A1518 and A1519) in the loop of a conserved hairpin near the 3'-end of 16S rRNA in the 30S particle. May play a critical role in biogenesis of 30S subunits.</text>
</comment>
<comment type="catalytic activity">
    <reaction evidence="1">
        <text>adenosine(1518)/adenosine(1519) in 16S rRNA + 4 S-adenosyl-L-methionine = N(6)-dimethyladenosine(1518)/N(6)-dimethyladenosine(1519) in 16S rRNA + 4 S-adenosyl-L-homocysteine + 4 H(+)</text>
        <dbReference type="Rhea" id="RHEA:19609"/>
        <dbReference type="Rhea" id="RHEA-COMP:10232"/>
        <dbReference type="Rhea" id="RHEA-COMP:10233"/>
        <dbReference type="ChEBI" id="CHEBI:15378"/>
        <dbReference type="ChEBI" id="CHEBI:57856"/>
        <dbReference type="ChEBI" id="CHEBI:59789"/>
        <dbReference type="ChEBI" id="CHEBI:74411"/>
        <dbReference type="ChEBI" id="CHEBI:74493"/>
        <dbReference type="EC" id="2.1.1.182"/>
    </reaction>
</comment>
<comment type="subcellular location">
    <subcellularLocation>
        <location evidence="1">Cytoplasm</location>
    </subcellularLocation>
</comment>
<comment type="similarity">
    <text evidence="1">Belongs to the class I-like SAM-binding methyltransferase superfamily. rRNA adenine N(6)-methyltransferase family. RsmA subfamily.</text>
</comment>
<dbReference type="EC" id="2.1.1.182" evidence="1"/>
<dbReference type="EMBL" id="CP000001">
    <property type="protein sequence ID" value="AAU20194.1"/>
    <property type="molecule type" value="Genomic_DNA"/>
</dbReference>
<dbReference type="RefSeq" id="WP_000651552.1">
    <property type="nucleotide sequence ID" value="NZ_CP009968.1"/>
</dbReference>
<dbReference type="SMR" id="Q63HJ1"/>
<dbReference type="GeneID" id="75083305"/>
<dbReference type="KEGG" id="bcz:BCE33L0037"/>
<dbReference type="PATRIC" id="fig|288681.22.peg.118"/>
<dbReference type="Proteomes" id="UP000002612">
    <property type="component" value="Chromosome"/>
</dbReference>
<dbReference type="GO" id="GO:0005829">
    <property type="term" value="C:cytosol"/>
    <property type="evidence" value="ECO:0007669"/>
    <property type="project" value="TreeGrafter"/>
</dbReference>
<dbReference type="GO" id="GO:0052908">
    <property type="term" value="F:16S rRNA (adenine(1518)-N(6)/adenine(1519)-N(6))-dimethyltransferase activity"/>
    <property type="evidence" value="ECO:0007669"/>
    <property type="project" value="UniProtKB-EC"/>
</dbReference>
<dbReference type="GO" id="GO:0003723">
    <property type="term" value="F:RNA binding"/>
    <property type="evidence" value="ECO:0007669"/>
    <property type="project" value="UniProtKB-KW"/>
</dbReference>
<dbReference type="CDD" id="cd02440">
    <property type="entry name" value="AdoMet_MTases"/>
    <property type="match status" value="1"/>
</dbReference>
<dbReference type="FunFam" id="1.10.8.100:FF:000002">
    <property type="entry name" value="Ribosomal RNA small subunit methyltransferase A"/>
    <property type="match status" value="1"/>
</dbReference>
<dbReference type="FunFam" id="3.40.50.150:FF:000023">
    <property type="entry name" value="Ribosomal RNA small subunit methyltransferase A"/>
    <property type="match status" value="1"/>
</dbReference>
<dbReference type="Gene3D" id="1.10.8.100">
    <property type="entry name" value="Ribosomal RNA adenine dimethylase-like, domain 2"/>
    <property type="match status" value="1"/>
</dbReference>
<dbReference type="Gene3D" id="3.40.50.150">
    <property type="entry name" value="Vaccinia Virus protein VP39"/>
    <property type="match status" value="1"/>
</dbReference>
<dbReference type="HAMAP" id="MF_00607">
    <property type="entry name" value="16SrRNA_methyltr_A"/>
    <property type="match status" value="1"/>
</dbReference>
<dbReference type="InterPro" id="IPR001737">
    <property type="entry name" value="KsgA/Erm"/>
</dbReference>
<dbReference type="InterPro" id="IPR023165">
    <property type="entry name" value="rRNA_Ade_diMease-like_C"/>
</dbReference>
<dbReference type="InterPro" id="IPR020596">
    <property type="entry name" value="rRNA_Ade_Mease_Trfase_CS"/>
</dbReference>
<dbReference type="InterPro" id="IPR020598">
    <property type="entry name" value="rRNA_Ade_methylase_Trfase_N"/>
</dbReference>
<dbReference type="InterPro" id="IPR011530">
    <property type="entry name" value="rRNA_adenine_dimethylase"/>
</dbReference>
<dbReference type="InterPro" id="IPR029063">
    <property type="entry name" value="SAM-dependent_MTases_sf"/>
</dbReference>
<dbReference type="NCBIfam" id="TIGR00755">
    <property type="entry name" value="ksgA"/>
    <property type="match status" value="1"/>
</dbReference>
<dbReference type="PANTHER" id="PTHR11727">
    <property type="entry name" value="DIMETHYLADENOSINE TRANSFERASE"/>
    <property type="match status" value="1"/>
</dbReference>
<dbReference type="PANTHER" id="PTHR11727:SF7">
    <property type="entry name" value="DIMETHYLADENOSINE TRANSFERASE-RELATED"/>
    <property type="match status" value="1"/>
</dbReference>
<dbReference type="Pfam" id="PF00398">
    <property type="entry name" value="RrnaAD"/>
    <property type="match status" value="1"/>
</dbReference>
<dbReference type="SMART" id="SM00650">
    <property type="entry name" value="rADc"/>
    <property type="match status" value="1"/>
</dbReference>
<dbReference type="SUPFAM" id="SSF53335">
    <property type="entry name" value="S-adenosyl-L-methionine-dependent methyltransferases"/>
    <property type="match status" value="1"/>
</dbReference>
<dbReference type="PROSITE" id="PS01131">
    <property type="entry name" value="RRNA_A_DIMETH"/>
    <property type="match status" value="1"/>
</dbReference>
<dbReference type="PROSITE" id="PS51689">
    <property type="entry name" value="SAM_RNA_A_N6_MT"/>
    <property type="match status" value="1"/>
</dbReference>